<dbReference type="EMBL" id="CP000316">
    <property type="protein sequence ID" value="ABE42355.1"/>
    <property type="molecule type" value="Genomic_DNA"/>
</dbReference>
<dbReference type="RefSeq" id="WP_011481362.1">
    <property type="nucleotide sequence ID" value="NC_007948.1"/>
</dbReference>
<dbReference type="SMR" id="Q12GI7"/>
<dbReference type="STRING" id="296591.Bpro_0391"/>
<dbReference type="KEGG" id="pol:Bpro_0391"/>
<dbReference type="eggNOG" id="COG0792">
    <property type="taxonomic scope" value="Bacteria"/>
</dbReference>
<dbReference type="HOGENOM" id="CLU_115353_1_0_4"/>
<dbReference type="OrthoDB" id="9794876at2"/>
<dbReference type="Proteomes" id="UP000001983">
    <property type="component" value="Chromosome"/>
</dbReference>
<dbReference type="GO" id="GO:0003676">
    <property type="term" value="F:nucleic acid binding"/>
    <property type="evidence" value="ECO:0007669"/>
    <property type="project" value="InterPro"/>
</dbReference>
<dbReference type="CDD" id="cd20736">
    <property type="entry name" value="PoNe_Nuclease"/>
    <property type="match status" value="1"/>
</dbReference>
<dbReference type="Gene3D" id="3.40.1350.10">
    <property type="match status" value="1"/>
</dbReference>
<dbReference type="HAMAP" id="MF_00048">
    <property type="entry name" value="UPF0102"/>
    <property type="match status" value="1"/>
</dbReference>
<dbReference type="InterPro" id="IPR011335">
    <property type="entry name" value="Restrct_endonuc-II-like"/>
</dbReference>
<dbReference type="InterPro" id="IPR011856">
    <property type="entry name" value="tRNA_endonuc-like_dom_sf"/>
</dbReference>
<dbReference type="InterPro" id="IPR003509">
    <property type="entry name" value="UPF0102_YraN-like"/>
</dbReference>
<dbReference type="NCBIfam" id="NF009150">
    <property type="entry name" value="PRK12497.1-3"/>
    <property type="match status" value="1"/>
</dbReference>
<dbReference type="NCBIfam" id="TIGR00252">
    <property type="entry name" value="YraN family protein"/>
    <property type="match status" value="1"/>
</dbReference>
<dbReference type="PANTHER" id="PTHR34039">
    <property type="entry name" value="UPF0102 PROTEIN YRAN"/>
    <property type="match status" value="1"/>
</dbReference>
<dbReference type="PANTHER" id="PTHR34039:SF1">
    <property type="entry name" value="UPF0102 PROTEIN YRAN"/>
    <property type="match status" value="1"/>
</dbReference>
<dbReference type="Pfam" id="PF02021">
    <property type="entry name" value="UPF0102"/>
    <property type="match status" value="1"/>
</dbReference>
<dbReference type="SUPFAM" id="SSF52980">
    <property type="entry name" value="Restriction endonuclease-like"/>
    <property type="match status" value="1"/>
</dbReference>
<name>Y391_POLSJ</name>
<comment type="similarity">
    <text evidence="1">Belongs to the UPF0102 family.</text>
</comment>
<sequence length="149" mass="15905">MWFSRKQVVKPPPDGSRAQPGQVTTKSRGDAAESAAQVFLARAGLIPVESNYRTPGRGGGEIDLVMRTPDGTLVFVEVRQRSGASHGGAAASISPAKQQRIIFAARHYLMRFASPPPCRFDVVLVHGGPGQGPVENGRLEWLPAAFDAS</sequence>
<feature type="chain" id="PRO_0000336224" description="UPF0102 protein Bpro_0391">
    <location>
        <begin position="1"/>
        <end position="149"/>
    </location>
</feature>
<feature type="region of interest" description="Disordered" evidence="2">
    <location>
        <begin position="1"/>
        <end position="30"/>
    </location>
</feature>
<evidence type="ECO:0000255" key="1">
    <source>
        <dbReference type="HAMAP-Rule" id="MF_00048"/>
    </source>
</evidence>
<evidence type="ECO:0000256" key="2">
    <source>
        <dbReference type="SAM" id="MobiDB-lite"/>
    </source>
</evidence>
<accession>Q12GI7</accession>
<protein>
    <recommendedName>
        <fullName evidence="1">UPF0102 protein Bpro_0391</fullName>
    </recommendedName>
</protein>
<organism>
    <name type="scientific">Polaromonas sp. (strain JS666 / ATCC BAA-500)</name>
    <dbReference type="NCBI Taxonomy" id="296591"/>
    <lineage>
        <taxon>Bacteria</taxon>
        <taxon>Pseudomonadati</taxon>
        <taxon>Pseudomonadota</taxon>
        <taxon>Betaproteobacteria</taxon>
        <taxon>Burkholderiales</taxon>
        <taxon>Comamonadaceae</taxon>
        <taxon>Polaromonas</taxon>
    </lineage>
</organism>
<gene>
    <name type="ordered locus">Bpro_0391</name>
</gene>
<reference key="1">
    <citation type="journal article" date="2008" name="Appl. Environ. Microbiol.">
        <title>The genome of Polaromonas sp. strain JS666: insights into the evolution of a hydrocarbon- and xenobiotic-degrading bacterium, and features of relevance to biotechnology.</title>
        <authorList>
            <person name="Mattes T.E."/>
            <person name="Alexander A.K."/>
            <person name="Richardson P.M."/>
            <person name="Munk A.C."/>
            <person name="Han C.S."/>
            <person name="Stothard P."/>
            <person name="Coleman N.V."/>
        </authorList>
    </citation>
    <scope>NUCLEOTIDE SEQUENCE [LARGE SCALE GENOMIC DNA]</scope>
    <source>
        <strain>JS666 / ATCC BAA-500</strain>
    </source>
</reference>
<keyword id="KW-1185">Reference proteome</keyword>
<proteinExistence type="inferred from homology"/>